<gene>
    <name evidence="1" type="primary">ubiE</name>
    <name type="ordered locus">BARBAKC583_1347</name>
</gene>
<evidence type="ECO:0000255" key="1">
    <source>
        <dbReference type="HAMAP-Rule" id="MF_01813"/>
    </source>
</evidence>
<comment type="function">
    <text evidence="1">Methyltransferase required for the conversion of demethylmenaquinol (DMKH2) to menaquinol (MKH2) and the conversion of 2-polyprenyl-6-methoxy-1,4-benzoquinol (DDMQH2) to 2-polyprenyl-3-methyl-6-methoxy-1,4-benzoquinol (DMQH2).</text>
</comment>
<comment type="catalytic activity">
    <reaction evidence="1">
        <text>a 2-demethylmenaquinol + S-adenosyl-L-methionine = a menaquinol + S-adenosyl-L-homocysteine + H(+)</text>
        <dbReference type="Rhea" id="RHEA:42640"/>
        <dbReference type="Rhea" id="RHEA-COMP:9539"/>
        <dbReference type="Rhea" id="RHEA-COMP:9563"/>
        <dbReference type="ChEBI" id="CHEBI:15378"/>
        <dbReference type="ChEBI" id="CHEBI:18151"/>
        <dbReference type="ChEBI" id="CHEBI:55437"/>
        <dbReference type="ChEBI" id="CHEBI:57856"/>
        <dbReference type="ChEBI" id="CHEBI:59789"/>
        <dbReference type="EC" id="2.1.1.163"/>
    </reaction>
</comment>
<comment type="catalytic activity">
    <reaction evidence="1">
        <text>a 2-methoxy-6-(all-trans-polyprenyl)benzene-1,4-diol + S-adenosyl-L-methionine = a 5-methoxy-2-methyl-3-(all-trans-polyprenyl)benzene-1,4-diol + S-adenosyl-L-homocysteine + H(+)</text>
        <dbReference type="Rhea" id="RHEA:28286"/>
        <dbReference type="Rhea" id="RHEA-COMP:10858"/>
        <dbReference type="Rhea" id="RHEA-COMP:10859"/>
        <dbReference type="ChEBI" id="CHEBI:15378"/>
        <dbReference type="ChEBI" id="CHEBI:57856"/>
        <dbReference type="ChEBI" id="CHEBI:59789"/>
        <dbReference type="ChEBI" id="CHEBI:84166"/>
        <dbReference type="ChEBI" id="CHEBI:84167"/>
        <dbReference type="EC" id="2.1.1.201"/>
    </reaction>
</comment>
<comment type="pathway">
    <text evidence="1">Quinol/quinone metabolism; menaquinone biosynthesis; menaquinol from 1,4-dihydroxy-2-naphthoate: step 2/2.</text>
</comment>
<comment type="pathway">
    <text evidence="1">Cofactor biosynthesis; ubiquinone biosynthesis.</text>
</comment>
<comment type="similarity">
    <text evidence="1">Belongs to the class I-like SAM-binding methyltransferase superfamily. MenG/UbiE family.</text>
</comment>
<organism>
    <name type="scientific">Bartonella bacilliformis (strain ATCC 35685 / KC583 / Herrer 020/F12,63)</name>
    <dbReference type="NCBI Taxonomy" id="360095"/>
    <lineage>
        <taxon>Bacteria</taxon>
        <taxon>Pseudomonadati</taxon>
        <taxon>Pseudomonadota</taxon>
        <taxon>Alphaproteobacteria</taxon>
        <taxon>Hyphomicrobiales</taxon>
        <taxon>Bartonellaceae</taxon>
        <taxon>Bartonella</taxon>
    </lineage>
</organism>
<protein>
    <recommendedName>
        <fullName evidence="1">Ubiquinone/menaquinone biosynthesis C-methyltransferase UbiE</fullName>
        <ecNumber evidence="1">2.1.1.163</ecNumber>
        <ecNumber evidence="1">2.1.1.201</ecNumber>
    </recommendedName>
    <alternativeName>
        <fullName evidence="1">2-methoxy-6-polyprenyl-1,4-benzoquinol methylase</fullName>
    </alternativeName>
    <alternativeName>
        <fullName evidence="1">Demethylmenaquinone methyltransferase</fullName>
    </alternativeName>
</protein>
<dbReference type="EC" id="2.1.1.163" evidence="1"/>
<dbReference type="EC" id="2.1.1.201" evidence="1"/>
<dbReference type="EMBL" id="CP000524">
    <property type="protein sequence ID" value="ABM45341.1"/>
    <property type="molecule type" value="Genomic_DNA"/>
</dbReference>
<dbReference type="RefSeq" id="WP_005768151.1">
    <property type="nucleotide sequence ID" value="NC_008783.1"/>
</dbReference>
<dbReference type="SMR" id="A1UUE1"/>
<dbReference type="STRING" id="360095.BARBAKC583_1347"/>
<dbReference type="GeneID" id="4685054"/>
<dbReference type="KEGG" id="bbk:BARBAKC583_1347"/>
<dbReference type="PATRIC" id="fig|360095.6.peg.1320"/>
<dbReference type="eggNOG" id="COG2226">
    <property type="taxonomic scope" value="Bacteria"/>
</dbReference>
<dbReference type="HOGENOM" id="CLU_037990_0_0_5"/>
<dbReference type="OrthoDB" id="9808140at2"/>
<dbReference type="UniPathway" id="UPA00079">
    <property type="reaction ID" value="UER00169"/>
</dbReference>
<dbReference type="UniPathway" id="UPA00232"/>
<dbReference type="Proteomes" id="UP000000643">
    <property type="component" value="Chromosome"/>
</dbReference>
<dbReference type="GO" id="GO:0008425">
    <property type="term" value="F:2-methoxy-6-polyprenyl-1,4-benzoquinol methyltransferase activity"/>
    <property type="evidence" value="ECO:0007669"/>
    <property type="project" value="UniProtKB-UniRule"/>
</dbReference>
<dbReference type="GO" id="GO:0043770">
    <property type="term" value="F:demethylmenaquinone methyltransferase activity"/>
    <property type="evidence" value="ECO:0007669"/>
    <property type="project" value="UniProtKB-UniRule"/>
</dbReference>
<dbReference type="GO" id="GO:0009060">
    <property type="term" value="P:aerobic respiration"/>
    <property type="evidence" value="ECO:0007669"/>
    <property type="project" value="UniProtKB-UniRule"/>
</dbReference>
<dbReference type="GO" id="GO:0009234">
    <property type="term" value="P:menaquinone biosynthetic process"/>
    <property type="evidence" value="ECO:0007669"/>
    <property type="project" value="UniProtKB-UniRule"/>
</dbReference>
<dbReference type="GO" id="GO:0032259">
    <property type="term" value="P:methylation"/>
    <property type="evidence" value="ECO:0007669"/>
    <property type="project" value="UniProtKB-KW"/>
</dbReference>
<dbReference type="CDD" id="cd02440">
    <property type="entry name" value="AdoMet_MTases"/>
    <property type="match status" value="1"/>
</dbReference>
<dbReference type="Gene3D" id="3.40.50.150">
    <property type="entry name" value="Vaccinia Virus protein VP39"/>
    <property type="match status" value="1"/>
</dbReference>
<dbReference type="HAMAP" id="MF_01813">
    <property type="entry name" value="MenG_UbiE_methyltr"/>
    <property type="match status" value="1"/>
</dbReference>
<dbReference type="InterPro" id="IPR029063">
    <property type="entry name" value="SAM-dependent_MTases_sf"/>
</dbReference>
<dbReference type="InterPro" id="IPR004033">
    <property type="entry name" value="UbiE/COQ5_MeTrFase"/>
</dbReference>
<dbReference type="InterPro" id="IPR023576">
    <property type="entry name" value="UbiE/COQ5_MeTrFase_CS"/>
</dbReference>
<dbReference type="NCBIfam" id="TIGR01934">
    <property type="entry name" value="MenG_MenH_UbiE"/>
    <property type="match status" value="1"/>
</dbReference>
<dbReference type="NCBIfam" id="NF001242">
    <property type="entry name" value="PRK00216.1-3"/>
    <property type="match status" value="1"/>
</dbReference>
<dbReference type="NCBIfam" id="NF001244">
    <property type="entry name" value="PRK00216.1-5"/>
    <property type="match status" value="1"/>
</dbReference>
<dbReference type="PANTHER" id="PTHR43591:SF24">
    <property type="entry name" value="2-METHOXY-6-POLYPRENYL-1,4-BENZOQUINOL METHYLASE, MITOCHONDRIAL"/>
    <property type="match status" value="1"/>
</dbReference>
<dbReference type="PANTHER" id="PTHR43591">
    <property type="entry name" value="METHYLTRANSFERASE"/>
    <property type="match status" value="1"/>
</dbReference>
<dbReference type="Pfam" id="PF01209">
    <property type="entry name" value="Ubie_methyltran"/>
    <property type="match status" value="1"/>
</dbReference>
<dbReference type="SUPFAM" id="SSF53335">
    <property type="entry name" value="S-adenosyl-L-methionine-dependent methyltransferases"/>
    <property type="match status" value="1"/>
</dbReference>
<dbReference type="PROSITE" id="PS51608">
    <property type="entry name" value="SAM_MT_UBIE"/>
    <property type="match status" value="1"/>
</dbReference>
<dbReference type="PROSITE" id="PS01183">
    <property type="entry name" value="UBIE_1"/>
    <property type="match status" value="1"/>
</dbReference>
<dbReference type="PROSITE" id="PS01184">
    <property type="entry name" value="UBIE_2"/>
    <property type="match status" value="1"/>
</dbReference>
<feature type="chain" id="PRO_1000056220" description="Ubiquinone/menaquinone biosynthesis C-methyltransferase UbiE">
    <location>
        <begin position="1"/>
        <end position="260"/>
    </location>
</feature>
<feature type="binding site" evidence="1">
    <location>
        <position position="83"/>
    </location>
    <ligand>
        <name>S-adenosyl-L-methionine</name>
        <dbReference type="ChEBI" id="CHEBI:59789"/>
    </ligand>
</feature>
<feature type="binding site" evidence="1">
    <location>
        <position position="104"/>
    </location>
    <ligand>
        <name>S-adenosyl-L-methionine</name>
        <dbReference type="ChEBI" id="CHEBI:59789"/>
    </ligand>
</feature>
<feature type="binding site" evidence="1">
    <location>
        <begin position="132"/>
        <end position="133"/>
    </location>
    <ligand>
        <name>S-adenosyl-L-methionine</name>
        <dbReference type="ChEBI" id="CHEBI:59789"/>
    </ligand>
</feature>
<accession>A1UUE1</accession>
<proteinExistence type="inferred from homology"/>
<name>UBIE_BARBK</name>
<keyword id="KW-0474">Menaquinone biosynthesis</keyword>
<keyword id="KW-0489">Methyltransferase</keyword>
<keyword id="KW-0949">S-adenosyl-L-methionine</keyword>
<keyword id="KW-0808">Transferase</keyword>
<keyword id="KW-0831">Ubiquinone biosynthesis</keyword>
<sequence>MTAETKRVGATGGMENSFGFTQIDEAQKQSMVDGVFHSVAENYDRMNDILSLGLHRIWKNSMITWLAPPAISGWKVIDVAGGTGDIAFRILNASRKKAHATVLDINHSMLNVGKKRAQINGLAPFIDFVEANAEQLPFSDQSFDAYTIAFGIRNVPHIDKALSEAFRVLKPGGRFLCLEFSNVEMPLLDKLYDLWSFHAIPKLGQLIAGNSDAYRYLVESIRMFPKQDDFACMINRAGFSRVSYRNFTGAIAALHSGWKI</sequence>
<reference key="1">
    <citation type="submission" date="2006-12" db="EMBL/GenBank/DDBJ databases">
        <authorList>
            <person name="Hendrix L."/>
            <person name="Mohamoud Y."/>
            <person name="Radune D."/>
            <person name="Shvartsbeyn A."/>
            <person name="Daugherty S."/>
            <person name="Dodson R."/>
            <person name="Durkin A.S."/>
            <person name="Harkins D."/>
            <person name="Huot H."/>
            <person name="Kothari S.P."/>
            <person name="Madupu R."/>
            <person name="Li J."/>
            <person name="Nelson W.C."/>
            <person name="Shrivastava S."/>
            <person name="Giglio M.G."/>
            <person name="Haft D."/>
            <person name="Selengut J."/>
            <person name="Fraser-Ligget C."/>
            <person name="Seshadri R."/>
        </authorList>
    </citation>
    <scope>NUCLEOTIDE SEQUENCE [LARGE SCALE GENOMIC DNA]</scope>
    <source>
        <strain>ATCC 35685 / KC583 / Herrer 020/F12,63</strain>
    </source>
</reference>